<keyword id="KW-0025">Alternative splicing</keyword>
<keyword id="KW-0227">DNA damage</keyword>
<keyword id="KW-0234">DNA repair</keyword>
<keyword id="KW-0539">Nucleus</keyword>
<keyword id="KW-1185">Reference proteome</keyword>
<keyword id="KW-0677">Repeat</keyword>
<keyword id="KW-0853">WD repeat</keyword>
<organism>
    <name type="scientific">Arabidopsis thaliana</name>
    <name type="common">Mouse-ear cress</name>
    <dbReference type="NCBI Taxonomy" id="3702"/>
    <lineage>
        <taxon>Eukaryota</taxon>
        <taxon>Viridiplantae</taxon>
        <taxon>Streptophyta</taxon>
        <taxon>Embryophyta</taxon>
        <taxon>Tracheophyta</taxon>
        <taxon>Spermatophyta</taxon>
        <taxon>Magnoliopsida</taxon>
        <taxon>eudicotyledons</taxon>
        <taxon>Gunneridae</taxon>
        <taxon>Pentapetalae</taxon>
        <taxon>rosids</taxon>
        <taxon>malvids</taxon>
        <taxon>Brassicales</taxon>
        <taxon>Brassicaceae</taxon>
        <taxon>Camelineae</taxon>
        <taxon>Arabidopsis</taxon>
    </lineage>
</organism>
<proteinExistence type="evidence at protein level"/>
<comment type="function">
    <text evidence="3">Involved in UV-B tolerance and genome integrity. In association with DDB2, is necessary for repair of UV-B-induced DNA lesions.</text>
</comment>
<comment type="subunit">
    <text evidence="3">Interacts with DDB1A.</text>
</comment>
<comment type="subcellular location">
    <subcellularLocation>
        <location evidence="3">Nucleus</location>
    </subcellularLocation>
    <text evidence="3">Localizes in a speckled pattern.</text>
</comment>
<comment type="alternative products">
    <event type="alternative splicing"/>
    <isoform>
        <id>Q93ZG3-1</id>
        <name>1</name>
        <sequence type="displayed"/>
    </isoform>
    <isoform>
        <id>Q93ZG3-2</id>
        <name>2</name>
        <sequence type="described" ref="VSP_059390"/>
    </isoform>
</comment>
<comment type="tissue specificity">
    <text evidence="3">Expressed in roots, leaves, stems, flowers and siliques.</text>
</comment>
<comment type="disruption phenotype">
    <text evidence="3">No visible phenotype under normal growth conditions, but mutant plants exhibit sensitivity to UV-B and decreased DNA repair activity following UV-B treatment.</text>
</comment>
<comment type="sequence caution" evidence="5">
    <conflict type="erroneous gene model prediction">
        <sequence resource="EMBL-CDS" id="AAG50581"/>
    </conflict>
</comment>
<dbReference type="EMBL" id="AC079280">
    <property type="protein sequence ID" value="AAG50581.1"/>
    <property type="status" value="ALT_SEQ"/>
    <property type="molecule type" value="Genomic_DNA"/>
</dbReference>
<dbReference type="EMBL" id="CP002684">
    <property type="protein sequence ID" value="AEE30881.1"/>
    <property type="molecule type" value="Genomic_DNA"/>
</dbReference>
<dbReference type="EMBL" id="CP002684">
    <property type="protein sequence ID" value="AEE30882.1"/>
    <property type="molecule type" value="Genomic_DNA"/>
</dbReference>
<dbReference type="EMBL" id="AY057556">
    <property type="protein sequence ID" value="AAL09795.1"/>
    <property type="molecule type" value="mRNA"/>
</dbReference>
<dbReference type="EMBL" id="AY074265">
    <property type="protein sequence ID" value="AAL66962.1"/>
    <property type="molecule type" value="mRNA"/>
</dbReference>
<dbReference type="EMBL" id="AY096624">
    <property type="protein sequence ID" value="AAM20274.1"/>
    <property type="molecule type" value="mRNA"/>
</dbReference>
<dbReference type="EMBL" id="AK175747">
    <property type="protein sequence ID" value="BAD43510.1"/>
    <property type="molecule type" value="mRNA"/>
</dbReference>
<dbReference type="EMBL" id="AK176142">
    <property type="protein sequence ID" value="BAD43905.1"/>
    <property type="molecule type" value="mRNA"/>
</dbReference>
<dbReference type="EMBL" id="AK175917">
    <property type="protein sequence ID" value="BAD43680.1"/>
    <property type="molecule type" value="mRNA"/>
</dbReference>
<dbReference type="PIR" id="E86403">
    <property type="entry name" value="E86403"/>
</dbReference>
<dbReference type="RefSeq" id="NP_001031098.1">
    <molecule id="Q93ZG3-2"/>
    <property type="nucleotide sequence ID" value="NM_001036021.1"/>
</dbReference>
<dbReference type="RefSeq" id="NP_174105.2">
    <molecule id="Q93ZG3-1"/>
    <property type="nucleotide sequence ID" value="NM_102549.5"/>
</dbReference>
<dbReference type="SMR" id="Q93ZG3"/>
<dbReference type="FunCoup" id="Q93ZG3">
    <property type="interactions" value="3629"/>
</dbReference>
<dbReference type="STRING" id="3702.Q93ZG3"/>
<dbReference type="iPTMnet" id="Q93ZG3"/>
<dbReference type="PaxDb" id="3702-AT1G27840.3"/>
<dbReference type="ProteomicsDB" id="244353">
    <molecule id="Q93ZG3-1"/>
</dbReference>
<dbReference type="EnsemblPlants" id="AT1G27840.1">
    <molecule id="Q93ZG3-1"/>
    <property type="protein sequence ID" value="AT1G27840.1"/>
    <property type="gene ID" value="AT1G27840"/>
</dbReference>
<dbReference type="EnsemblPlants" id="AT1G27840.2">
    <molecule id="Q93ZG3-2"/>
    <property type="protein sequence ID" value="AT1G27840.2"/>
    <property type="gene ID" value="AT1G27840"/>
</dbReference>
<dbReference type="GeneID" id="839677"/>
<dbReference type="Gramene" id="AT1G27840.1">
    <molecule id="Q93ZG3-1"/>
    <property type="protein sequence ID" value="AT1G27840.1"/>
    <property type="gene ID" value="AT1G27840"/>
</dbReference>
<dbReference type="Gramene" id="AT1G27840.2">
    <molecule id="Q93ZG3-2"/>
    <property type="protein sequence ID" value="AT1G27840.2"/>
    <property type="gene ID" value="AT1G27840"/>
</dbReference>
<dbReference type="KEGG" id="ath:AT1G27840"/>
<dbReference type="Araport" id="AT1G27840"/>
<dbReference type="TAIR" id="AT1G27840">
    <property type="gene designation" value="ATCSA-1"/>
</dbReference>
<dbReference type="InParanoid" id="Q93ZG3"/>
<dbReference type="OMA" id="WIPAPRE"/>
<dbReference type="OrthoDB" id="361494at2759"/>
<dbReference type="PhylomeDB" id="Q93ZG3"/>
<dbReference type="PRO" id="PR:Q93ZG3"/>
<dbReference type="Proteomes" id="UP000006548">
    <property type="component" value="Chromosome 1"/>
</dbReference>
<dbReference type="ExpressionAtlas" id="Q93ZG3">
    <property type="expression patterns" value="baseline and differential"/>
</dbReference>
<dbReference type="GO" id="GO:0005634">
    <property type="term" value="C:nucleus"/>
    <property type="evidence" value="ECO:0000314"/>
    <property type="project" value="UniProtKB"/>
</dbReference>
<dbReference type="GO" id="GO:0006281">
    <property type="term" value="P:DNA repair"/>
    <property type="evidence" value="ECO:0000315"/>
    <property type="project" value="UniProtKB"/>
</dbReference>
<dbReference type="GO" id="GO:0010224">
    <property type="term" value="P:response to UV-B"/>
    <property type="evidence" value="ECO:0000315"/>
    <property type="project" value="UniProtKB"/>
</dbReference>
<dbReference type="GO" id="GO:0006283">
    <property type="term" value="P:transcription-coupled nucleotide-excision repair"/>
    <property type="evidence" value="ECO:0007669"/>
    <property type="project" value="InterPro"/>
</dbReference>
<dbReference type="FunFam" id="2.130.10.10:FF:001356">
    <property type="entry name" value="Excision repair cross-complementation group 8"/>
    <property type="match status" value="1"/>
</dbReference>
<dbReference type="FunFam" id="2.130.10.10:FF:001188">
    <property type="entry name" value="Transducin/WD40 repeat-like superfamily protein"/>
    <property type="match status" value="1"/>
</dbReference>
<dbReference type="Gene3D" id="2.130.10.10">
    <property type="entry name" value="YVTN repeat-like/Quinoprotein amine dehydrogenase"/>
    <property type="match status" value="1"/>
</dbReference>
<dbReference type="InterPro" id="IPR020472">
    <property type="entry name" value="G-protein_beta_WD-40_rep"/>
</dbReference>
<dbReference type="InterPro" id="IPR042238">
    <property type="entry name" value="Rad28/ERCC8/Ckn1/ATCSA-1"/>
</dbReference>
<dbReference type="InterPro" id="IPR015943">
    <property type="entry name" value="WD40/YVTN_repeat-like_dom_sf"/>
</dbReference>
<dbReference type="InterPro" id="IPR019775">
    <property type="entry name" value="WD40_repeat_CS"/>
</dbReference>
<dbReference type="InterPro" id="IPR036322">
    <property type="entry name" value="WD40_repeat_dom_sf"/>
</dbReference>
<dbReference type="InterPro" id="IPR001680">
    <property type="entry name" value="WD40_rpt"/>
</dbReference>
<dbReference type="PANTHER" id="PTHR46202">
    <property type="entry name" value="DNA EXCISION REPAIR PROTEIN ERCC-8"/>
    <property type="match status" value="1"/>
</dbReference>
<dbReference type="PANTHER" id="PTHR46202:SF1">
    <property type="entry name" value="DNA EXCISION REPAIR PROTEIN ERCC-8"/>
    <property type="match status" value="1"/>
</dbReference>
<dbReference type="Pfam" id="PF00400">
    <property type="entry name" value="WD40"/>
    <property type="match status" value="4"/>
</dbReference>
<dbReference type="PRINTS" id="PR00320">
    <property type="entry name" value="GPROTEINBRPT"/>
</dbReference>
<dbReference type="SMART" id="SM00320">
    <property type="entry name" value="WD40"/>
    <property type="match status" value="5"/>
</dbReference>
<dbReference type="SUPFAM" id="SSF50978">
    <property type="entry name" value="WD40 repeat-like"/>
    <property type="match status" value="1"/>
</dbReference>
<dbReference type="PROSITE" id="PS00678">
    <property type="entry name" value="WD_REPEATS_1"/>
    <property type="match status" value="2"/>
</dbReference>
<dbReference type="PROSITE" id="PS50082">
    <property type="entry name" value="WD_REPEATS_2"/>
    <property type="match status" value="4"/>
</dbReference>
<dbReference type="PROSITE" id="PS50294">
    <property type="entry name" value="WD_REPEATS_REGION"/>
    <property type="match status" value="1"/>
</dbReference>
<protein>
    <recommendedName>
        <fullName evidence="5">WD repeat-containing protein ATCSA-1</fullName>
    </recommendedName>
    <alternativeName>
        <fullName evidence="5">Cockayne syndrome WD repeat protein CSA homolog</fullName>
    </alternativeName>
</protein>
<sequence>MWEAIKDRETGRIRSNSFANRFKSRRILSLQLSNRKDFVSPHRGSVNSLQVDLTEGRYLLSGAADGSAAVFDVQRATDYEASGLIAKHKCIFTVDKQHENGHKYAISSAIWYPIDTGLFITGSFDHYLKVWDTNTAQAVVDFKMPGKVYRTAMSSMAMSHTLIAAGTEDVQVRLCDIASGAFSHTLSGHRDGVMSVEWSTSSEWVLYTGGCDGAIRFWDIRRAGCFRVLDQSQTQLGFRPPILKRTAVGSKLSSVAKSSLGGQNRLKTLQSKQTGSQSVKGSSSAKASVEKSRQKRIHPGMLSTLDRATAHYGAVTGLKATNDGMYLLSAGSDSRIRLWDIESGRNTLVNFETGRIQTNKGIQLDTSDDPALVFVPCMKTVKAFGMWSGRTTLMLRGHYESVNTCCFNSNDQELYTSGSDRQILVWSPGGTVEDEMVQDEVAEDKDNWSD</sequence>
<evidence type="ECO:0000255" key="1"/>
<evidence type="ECO:0000256" key="2">
    <source>
        <dbReference type="SAM" id="MobiDB-lite"/>
    </source>
</evidence>
<evidence type="ECO:0000269" key="3">
    <source>
    </source>
</evidence>
<evidence type="ECO:0000303" key="4">
    <source>
    </source>
</evidence>
<evidence type="ECO:0000305" key="5"/>
<evidence type="ECO:0000312" key="6">
    <source>
        <dbReference type="Araport" id="AT1G27840"/>
    </source>
</evidence>
<evidence type="ECO:0000312" key="7">
    <source>
        <dbReference type="EMBL" id="AAG50581.1"/>
    </source>
</evidence>
<name>ACSA1_ARATH</name>
<reference key="1">
    <citation type="journal article" date="2000" name="Nature">
        <title>Sequence and analysis of chromosome 1 of the plant Arabidopsis thaliana.</title>
        <authorList>
            <person name="Theologis A."/>
            <person name="Ecker J.R."/>
            <person name="Palm C.J."/>
            <person name="Federspiel N.A."/>
            <person name="Kaul S."/>
            <person name="White O."/>
            <person name="Alonso J."/>
            <person name="Altafi H."/>
            <person name="Araujo R."/>
            <person name="Bowman C.L."/>
            <person name="Brooks S.Y."/>
            <person name="Buehler E."/>
            <person name="Chan A."/>
            <person name="Chao Q."/>
            <person name="Chen H."/>
            <person name="Cheuk R.F."/>
            <person name="Chin C.W."/>
            <person name="Chung M.K."/>
            <person name="Conn L."/>
            <person name="Conway A.B."/>
            <person name="Conway A.R."/>
            <person name="Creasy T.H."/>
            <person name="Dewar K."/>
            <person name="Dunn P."/>
            <person name="Etgu P."/>
            <person name="Feldblyum T.V."/>
            <person name="Feng J.-D."/>
            <person name="Fong B."/>
            <person name="Fujii C.Y."/>
            <person name="Gill J.E."/>
            <person name="Goldsmith A.D."/>
            <person name="Haas B."/>
            <person name="Hansen N.F."/>
            <person name="Hughes B."/>
            <person name="Huizar L."/>
            <person name="Hunter J.L."/>
            <person name="Jenkins J."/>
            <person name="Johnson-Hopson C."/>
            <person name="Khan S."/>
            <person name="Khaykin E."/>
            <person name="Kim C.J."/>
            <person name="Koo H.L."/>
            <person name="Kremenetskaia I."/>
            <person name="Kurtz D.B."/>
            <person name="Kwan A."/>
            <person name="Lam B."/>
            <person name="Langin-Hooper S."/>
            <person name="Lee A."/>
            <person name="Lee J.M."/>
            <person name="Lenz C.A."/>
            <person name="Li J.H."/>
            <person name="Li Y.-P."/>
            <person name="Lin X."/>
            <person name="Liu S.X."/>
            <person name="Liu Z.A."/>
            <person name="Luros J.S."/>
            <person name="Maiti R."/>
            <person name="Marziali A."/>
            <person name="Militscher J."/>
            <person name="Miranda M."/>
            <person name="Nguyen M."/>
            <person name="Nierman W.C."/>
            <person name="Osborne B.I."/>
            <person name="Pai G."/>
            <person name="Peterson J."/>
            <person name="Pham P.K."/>
            <person name="Rizzo M."/>
            <person name="Rooney T."/>
            <person name="Rowley D."/>
            <person name="Sakano H."/>
            <person name="Salzberg S.L."/>
            <person name="Schwartz J.R."/>
            <person name="Shinn P."/>
            <person name="Southwick A.M."/>
            <person name="Sun H."/>
            <person name="Tallon L.J."/>
            <person name="Tambunga G."/>
            <person name="Toriumi M.J."/>
            <person name="Town C.D."/>
            <person name="Utterback T."/>
            <person name="Van Aken S."/>
            <person name="Vaysberg M."/>
            <person name="Vysotskaia V.S."/>
            <person name="Walker M."/>
            <person name="Wu D."/>
            <person name="Yu G."/>
            <person name="Fraser C.M."/>
            <person name="Venter J.C."/>
            <person name="Davis R.W."/>
        </authorList>
    </citation>
    <scope>NUCLEOTIDE SEQUENCE [LARGE SCALE GENOMIC DNA]</scope>
    <source>
        <strain>cv. Columbia</strain>
    </source>
</reference>
<reference key="2">
    <citation type="journal article" date="2017" name="Plant J.">
        <title>Araport11: a complete reannotation of the Arabidopsis thaliana reference genome.</title>
        <authorList>
            <person name="Cheng C.Y."/>
            <person name="Krishnakumar V."/>
            <person name="Chan A.P."/>
            <person name="Thibaud-Nissen F."/>
            <person name="Schobel S."/>
            <person name="Town C.D."/>
        </authorList>
    </citation>
    <scope>GENOME REANNOTATION</scope>
    <source>
        <strain>cv. Columbia</strain>
    </source>
</reference>
<reference key="3">
    <citation type="journal article" date="2003" name="Science">
        <title>Empirical analysis of transcriptional activity in the Arabidopsis genome.</title>
        <authorList>
            <person name="Yamada K."/>
            <person name="Lim J."/>
            <person name="Dale J.M."/>
            <person name="Chen H."/>
            <person name="Shinn P."/>
            <person name="Palm C.J."/>
            <person name="Southwick A.M."/>
            <person name="Wu H.C."/>
            <person name="Kim C.J."/>
            <person name="Nguyen M."/>
            <person name="Pham P.K."/>
            <person name="Cheuk R.F."/>
            <person name="Karlin-Newmann G."/>
            <person name="Liu S.X."/>
            <person name="Lam B."/>
            <person name="Sakano H."/>
            <person name="Wu T."/>
            <person name="Yu G."/>
            <person name="Miranda M."/>
            <person name="Quach H.L."/>
            <person name="Tripp M."/>
            <person name="Chang C.H."/>
            <person name="Lee J.M."/>
            <person name="Toriumi M.J."/>
            <person name="Chan M.M."/>
            <person name="Tang C.C."/>
            <person name="Onodera C.S."/>
            <person name="Deng J.M."/>
            <person name="Akiyama K."/>
            <person name="Ansari Y."/>
            <person name="Arakawa T."/>
            <person name="Banh J."/>
            <person name="Banno F."/>
            <person name="Bowser L."/>
            <person name="Brooks S.Y."/>
            <person name="Carninci P."/>
            <person name="Chao Q."/>
            <person name="Choy N."/>
            <person name="Enju A."/>
            <person name="Goldsmith A.D."/>
            <person name="Gurjal M."/>
            <person name="Hansen N.F."/>
            <person name="Hayashizaki Y."/>
            <person name="Johnson-Hopson C."/>
            <person name="Hsuan V.W."/>
            <person name="Iida K."/>
            <person name="Karnes M."/>
            <person name="Khan S."/>
            <person name="Koesema E."/>
            <person name="Ishida J."/>
            <person name="Jiang P.X."/>
            <person name="Jones T."/>
            <person name="Kawai J."/>
            <person name="Kamiya A."/>
            <person name="Meyers C."/>
            <person name="Nakajima M."/>
            <person name="Narusaka M."/>
            <person name="Seki M."/>
            <person name="Sakurai T."/>
            <person name="Satou M."/>
            <person name="Tamse R."/>
            <person name="Vaysberg M."/>
            <person name="Wallender E.K."/>
            <person name="Wong C."/>
            <person name="Yamamura Y."/>
            <person name="Yuan S."/>
            <person name="Shinozaki K."/>
            <person name="Davis R.W."/>
            <person name="Theologis A."/>
            <person name="Ecker J.R."/>
        </authorList>
    </citation>
    <scope>NUCLEOTIDE SEQUENCE [LARGE SCALE MRNA]</scope>
    <source>
        <strain>cv. Columbia</strain>
    </source>
</reference>
<reference key="4">
    <citation type="submission" date="2004-09" db="EMBL/GenBank/DDBJ databases">
        <title>Large-scale analysis of RIKEN Arabidopsis full-length (RAFL) cDNAs.</title>
        <authorList>
            <person name="Totoki Y."/>
            <person name="Seki M."/>
            <person name="Ishida J."/>
            <person name="Nakajima M."/>
            <person name="Enju A."/>
            <person name="Kamiya A."/>
            <person name="Narusaka M."/>
            <person name="Shin-i T."/>
            <person name="Nakagawa M."/>
            <person name="Sakamoto N."/>
            <person name="Oishi K."/>
            <person name="Kohara Y."/>
            <person name="Kobayashi M."/>
            <person name="Toyoda A."/>
            <person name="Sakaki Y."/>
            <person name="Sakurai T."/>
            <person name="Iida K."/>
            <person name="Akiyama K."/>
            <person name="Satou M."/>
            <person name="Toyoda T."/>
            <person name="Konagaya A."/>
            <person name="Carninci P."/>
            <person name="Kawai J."/>
            <person name="Hayashizaki Y."/>
            <person name="Shinozaki K."/>
        </authorList>
    </citation>
    <scope>NUCLEOTIDE SEQUENCE [LARGE SCALE MRNA] (ISOFORM 2)</scope>
    <source>
        <strain>cv. Columbia</strain>
    </source>
</reference>
<reference key="5">
    <citation type="journal article" date="2010" name="Plant J.">
        <title>The DDB1a interacting proteins ATCSA-1 and DDB2 are critical factors for UV-B tolerance and genomic integrity in Arabidopsis thaliana.</title>
        <authorList>
            <person name="Biedermann S."/>
            <person name="Hellmann H."/>
        </authorList>
    </citation>
    <scope>FUNCTION</scope>
    <scope>INTERACTION WITH DDB1A</scope>
    <scope>SUBCELLULAR LOCATION</scope>
    <scope>TISSUE SPECIFICITY</scope>
    <scope>DISRUPTION PHENOTYPE</scope>
</reference>
<accession>Q93ZG3</accession>
<accession>Q680F0</accession>
<accession>Q9C6N4</accession>
<feature type="chain" id="PRO_0000443536" description="WD repeat-containing protein ATCSA-1">
    <location>
        <begin position="1"/>
        <end position="450"/>
    </location>
</feature>
<feature type="repeat" description="WD 1" evidence="1">
    <location>
        <begin position="41"/>
        <end position="81"/>
    </location>
</feature>
<feature type="repeat" description="WD 2" evidence="1">
    <location>
        <begin position="101"/>
        <end position="141"/>
    </location>
</feature>
<feature type="repeat" description="WD 3" evidence="1">
    <location>
        <begin position="148"/>
        <end position="185"/>
    </location>
</feature>
<feature type="repeat" description="WD 4" evidence="1">
    <location>
        <begin position="188"/>
        <end position="228"/>
    </location>
</feature>
<feature type="repeat" description="WD 5" evidence="1">
    <location>
        <begin position="310"/>
        <end position="349"/>
    </location>
</feature>
<feature type="repeat" description="WD 6" evidence="1">
    <location>
        <begin position="397"/>
        <end position="436"/>
    </location>
</feature>
<feature type="region of interest" description="Disordered" evidence="2">
    <location>
        <begin position="269"/>
        <end position="298"/>
    </location>
</feature>
<feature type="compositionally biased region" description="Low complexity" evidence="2">
    <location>
        <begin position="271"/>
        <end position="287"/>
    </location>
</feature>
<feature type="splice variant" id="VSP_059390" description="In isoform 2.">
    <location>
        <begin position="81"/>
        <end position="137"/>
    </location>
</feature>
<gene>
    <name evidence="4" type="primary">ATCSA-1</name>
    <name evidence="6" type="ordered locus">At1g27840</name>
    <name evidence="7" type="ORF">F28L5.15</name>
</gene>